<organism>
    <name type="scientific">Escherichia coli O139:H28 (strain E24377A / ETEC)</name>
    <dbReference type="NCBI Taxonomy" id="331111"/>
    <lineage>
        <taxon>Bacteria</taxon>
        <taxon>Pseudomonadati</taxon>
        <taxon>Pseudomonadota</taxon>
        <taxon>Gammaproteobacteria</taxon>
        <taxon>Enterobacterales</taxon>
        <taxon>Enterobacteriaceae</taxon>
        <taxon>Escherichia</taxon>
    </lineage>
</organism>
<gene>
    <name evidence="1" type="primary">astD</name>
    <name type="ordered locus">EcE24377A_1968</name>
</gene>
<reference key="1">
    <citation type="journal article" date="2008" name="J. Bacteriol.">
        <title>The pangenome structure of Escherichia coli: comparative genomic analysis of E. coli commensal and pathogenic isolates.</title>
        <authorList>
            <person name="Rasko D.A."/>
            <person name="Rosovitz M.J."/>
            <person name="Myers G.S.A."/>
            <person name="Mongodin E.F."/>
            <person name="Fricke W.F."/>
            <person name="Gajer P."/>
            <person name="Crabtree J."/>
            <person name="Sebaihia M."/>
            <person name="Thomson N.R."/>
            <person name="Chaudhuri R."/>
            <person name="Henderson I.R."/>
            <person name="Sperandio V."/>
            <person name="Ravel J."/>
        </authorList>
    </citation>
    <scope>NUCLEOTIDE SEQUENCE [LARGE SCALE GENOMIC DNA]</scope>
    <source>
        <strain>E24377A / ETEC</strain>
    </source>
</reference>
<accession>A7ZML4</accession>
<evidence type="ECO:0000255" key="1">
    <source>
        <dbReference type="HAMAP-Rule" id="MF_01174"/>
    </source>
</evidence>
<protein>
    <recommendedName>
        <fullName evidence="1">N-succinylglutamate 5-semialdehyde dehydrogenase</fullName>
        <ecNumber evidence="1">1.2.1.71</ecNumber>
    </recommendedName>
    <alternativeName>
        <fullName evidence="1">Succinylglutamic semialdehyde dehydrogenase</fullName>
        <shortName evidence="1">SGSD</shortName>
    </alternativeName>
</protein>
<sequence length="492" mass="53029">MTLWINGDWITGQGASRVKRNPVSGEVLWQGNDADAAQVGQACRAARAAFPRWARLSLAERQVVVERFAGLLERNKGELTAIIARETGKPRWEAATEVTAMINKIAISIKAYHVRTGEQRSEMPDGAASLRHRPHGVLAVFGPYNFPGHLPNGHIVPALLAGNTIIFKPSELTPWSGEAVMRLWQQAGLPPGVLNLVQGGRETGQALSALEDLDGLLFTGSANTGYQLHRQLSGQPEKILALEMGGNNPLIIDEVADIDAAVHLTIQSAFVTAGQRCTCARRLLLKSGAQGDAFLARLVAVSQRLTPGNWDDEPQPFIGGLISEQAAQQVVTAWQQLEAMGGRTLLAPRLLQSETSLLTPGIIEMTGVAGVPDEEVFGPLLRVWRYDSFEEAILMANNTRFGLSCGLVSPEREKFDQLLLEARAGIVNWNKPLTGAASTAPFGGIGASGNHRPSAWYAADYCAWPMASLESDSLTLPATLNPGLDFSDEVVR</sequence>
<feature type="chain" id="PRO_1000065754" description="N-succinylglutamate 5-semialdehyde dehydrogenase">
    <location>
        <begin position="1"/>
        <end position="492"/>
    </location>
</feature>
<feature type="active site" evidence="1">
    <location>
        <position position="243"/>
    </location>
</feature>
<feature type="active site" evidence="1">
    <location>
        <position position="277"/>
    </location>
</feature>
<feature type="binding site" evidence="1">
    <location>
        <begin position="220"/>
        <end position="225"/>
    </location>
    <ligand>
        <name>NAD(+)</name>
        <dbReference type="ChEBI" id="CHEBI:57540"/>
    </ligand>
</feature>
<name>ASTD_ECO24</name>
<comment type="function">
    <text evidence="1">Catalyzes the NAD-dependent reduction of succinylglutamate semialdehyde into succinylglutamate.</text>
</comment>
<comment type="catalytic activity">
    <reaction evidence="1">
        <text>N-succinyl-L-glutamate 5-semialdehyde + NAD(+) + H2O = N-succinyl-L-glutamate + NADH + 2 H(+)</text>
        <dbReference type="Rhea" id="RHEA:10812"/>
        <dbReference type="ChEBI" id="CHEBI:15377"/>
        <dbReference type="ChEBI" id="CHEBI:15378"/>
        <dbReference type="ChEBI" id="CHEBI:57540"/>
        <dbReference type="ChEBI" id="CHEBI:57945"/>
        <dbReference type="ChEBI" id="CHEBI:58520"/>
        <dbReference type="ChEBI" id="CHEBI:58763"/>
        <dbReference type="EC" id="1.2.1.71"/>
    </reaction>
</comment>
<comment type="pathway">
    <text evidence="1">Amino-acid degradation; L-arginine degradation via AST pathway; L-glutamate and succinate from L-arginine: step 4/5.</text>
</comment>
<comment type="similarity">
    <text evidence="1">Belongs to the aldehyde dehydrogenase family. AstD subfamily.</text>
</comment>
<dbReference type="EC" id="1.2.1.71" evidence="1"/>
<dbReference type="EMBL" id="CP000800">
    <property type="protein sequence ID" value="ABV17826.1"/>
    <property type="molecule type" value="Genomic_DNA"/>
</dbReference>
<dbReference type="RefSeq" id="WP_000177243.1">
    <property type="nucleotide sequence ID" value="NC_009801.1"/>
</dbReference>
<dbReference type="SMR" id="A7ZML4"/>
<dbReference type="GeneID" id="75203052"/>
<dbReference type="KEGG" id="ecw:EcE24377A_1968"/>
<dbReference type="HOGENOM" id="CLU_005391_1_0_6"/>
<dbReference type="UniPathway" id="UPA00185">
    <property type="reaction ID" value="UER00282"/>
</dbReference>
<dbReference type="Proteomes" id="UP000001122">
    <property type="component" value="Chromosome"/>
</dbReference>
<dbReference type="GO" id="GO:0004030">
    <property type="term" value="F:aldehyde dehydrogenase [NAD(P)+] activity"/>
    <property type="evidence" value="ECO:0007669"/>
    <property type="project" value="UniProtKB-ARBA"/>
</dbReference>
<dbReference type="GO" id="GO:0043824">
    <property type="term" value="F:succinylglutamate-semialdehyde dehydrogenase activity"/>
    <property type="evidence" value="ECO:0007669"/>
    <property type="project" value="UniProtKB-EC"/>
</dbReference>
<dbReference type="GO" id="GO:0019544">
    <property type="term" value="P:arginine catabolic process to glutamate"/>
    <property type="evidence" value="ECO:0007669"/>
    <property type="project" value="UniProtKB-UniRule"/>
</dbReference>
<dbReference type="GO" id="GO:0019545">
    <property type="term" value="P:arginine catabolic process to succinate"/>
    <property type="evidence" value="ECO:0007669"/>
    <property type="project" value="UniProtKB-UniRule"/>
</dbReference>
<dbReference type="CDD" id="cd07095">
    <property type="entry name" value="ALDH_SGSD_AstD"/>
    <property type="match status" value="1"/>
</dbReference>
<dbReference type="FunFam" id="3.40.309.10:FF:000013">
    <property type="entry name" value="N-succinylglutamate 5-semialdehyde dehydrogenase"/>
    <property type="match status" value="1"/>
</dbReference>
<dbReference type="FunFam" id="3.40.605.10:FF:000010">
    <property type="entry name" value="N-succinylglutamate 5-semialdehyde dehydrogenase"/>
    <property type="match status" value="1"/>
</dbReference>
<dbReference type="Gene3D" id="3.40.605.10">
    <property type="entry name" value="Aldehyde Dehydrogenase, Chain A, domain 1"/>
    <property type="match status" value="1"/>
</dbReference>
<dbReference type="Gene3D" id="3.40.309.10">
    <property type="entry name" value="Aldehyde Dehydrogenase, Chain A, domain 2"/>
    <property type="match status" value="1"/>
</dbReference>
<dbReference type="HAMAP" id="MF_01174">
    <property type="entry name" value="Aldedh_AstD"/>
    <property type="match status" value="1"/>
</dbReference>
<dbReference type="InterPro" id="IPR016161">
    <property type="entry name" value="Ald_DH/histidinol_DH"/>
</dbReference>
<dbReference type="InterPro" id="IPR016163">
    <property type="entry name" value="Ald_DH_C"/>
</dbReference>
<dbReference type="InterPro" id="IPR016160">
    <property type="entry name" value="Ald_DH_CS_CYS"/>
</dbReference>
<dbReference type="InterPro" id="IPR029510">
    <property type="entry name" value="Ald_DH_CS_GLU"/>
</dbReference>
<dbReference type="InterPro" id="IPR016162">
    <property type="entry name" value="Ald_DH_N"/>
</dbReference>
<dbReference type="InterPro" id="IPR015590">
    <property type="entry name" value="Aldehyde_DH_dom"/>
</dbReference>
<dbReference type="InterPro" id="IPR017649">
    <property type="entry name" value="SuccinylGlu_semiald_DH_AstD"/>
</dbReference>
<dbReference type="NCBIfam" id="TIGR03240">
    <property type="entry name" value="arg_catab_astD"/>
    <property type="match status" value="1"/>
</dbReference>
<dbReference type="NCBIfam" id="NF006992">
    <property type="entry name" value="PRK09457.1"/>
    <property type="match status" value="1"/>
</dbReference>
<dbReference type="PANTHER" id="PTHR11699">
    <property type="entry name" value="ALDEHYDE DEHYDROGENASE-RELATED"/>
    <property type="match status" value="1"/>
</dbReference>
<dbReference type="Pfam" id="PF00171">
    <property type="entry name" value="Aldedh"/>
    <property type="match status" value="1"/>
</dbReference>
<dbReference type="SUPFAM" id="SSF53720">
    <property type="entry name" value="ALDH-like"/>
    <property type="match status" value="1"/>
</dbReference>
<dbReference type="PROSITE" id="PS00070">
    <property type="entry name" value="ALDEHYDE_DEHYDR_CYS"/>
    <property type="match status" value="1"/>
</dbReference>
<dbReference type="PROSITE" id="PS00687">
    <property type="entry name" value="ALDEHYDE_DEHYDR_GLU"/>
    <property type="match status" value="1"/>
</dbReference>
<proteinExistence type="inferred from homology"/>
<keyword id="KW-0056">Arginine metabolism</keyword>
<keyword id="KW-0520">NAD</keyword>
<keyword id="KW-0560">Oxidoreductase</keyword>
<keyword id="KW-1185">Reference proteome</keyword>